<organism>
    <name type="scientific">Pyrococcus abyssi (strain GE5 / Orsay)</name>
    <dbReference type="NCBI Taxonomy" id="272844"/>
    <lineage>
        <taxon>Archaea</taxon>
        <taxon>Methanobacteriati</taxon>
        <taxon>Methanobacteriota</taxon>
        <taxon>Thermococci</taxon>
        <taxon>Thermococcales</taxon>
        <taxon>Thermococcaceae</taxon>
        <taxon>Pyrococcus</taxon>
    </lineage>
</organism>
<gene>
    <name evidence="1" type="primary">rpo12</name>
    <name evidence="1" type="synonym">rpoP</name>
    <name type="ordered locus">PYRAB02730</name>
    <name type="ORF">PAB3072</name>
</gene>
<dbReference type="EC" id="2.7.7.6" evidence="1"/>
<dbReference type="EMBL" id="AJ248283">
    <property type="protein sequence ID" value="CAB49197.1"/>
    <property type="molecule type" value="Genomic_DNA"/>
</dbReference>
<dbReference type="EMBL" id="HE613800">
    <property type="protein sequence ID" value="CCE69650.1"/>
    <property type="molecule type" value="Genomic_DNA"/>
</dbReference>
<dbReference type="PIR" id="F75218">
    <property type="entry name" value="F75218"/>
</dbReference>
<dbReference type="RefSeq" id="WP_010867397.1">
    <property type="nucleotide sequence ID" value="NC_000868.1"/>
</dbReference>
<dbReference type="SMR" id="Q9V201"/>
<dbReference type="STRING" id="272844.PAB3072"/>
<dbReference type="KEGG" id="pab:PAB3072"/>
<dbReference type="PATRIC" id="fig|272844.11.peg.293"/>
<dbReference type="eggNOG" id="arCOG04341">
    <property type="taxonomic scope" value="Archaea"/>
</dbReference>
<dbReference type="HOGENOM" id="CLU_179456_2_1_2"/>
<dbReference type="OrthoDB" id="129238at2157"/>
<dbReference type="PhylomeDB" id="Q9V201"/>
<dbReference type="Proteomes" id="UP000000810">
    <property type="component" value="Chromosome"/>
</dbReference>
<dbReference type="Proteomes" id="UP000009139">
    <property type="component" value="Chromosome"/>
</dbReference>
<dbReference type="GO" id="GO:0005737">
    <property type="term" value="C:cytoplasm"/>
    <property type="evidence" value="ECO:0007669"/>
    <property type="project" value="UniProtKB-SubCell"/>
</dbReference>
<dbReference type="GO" id="GO:0000428">
    <property type="term" value="C:DNA-directed RNA polymerase complex"/>
    <property type="evidence" value="ECO:0007669"/>
    <property type="project" value="UniProtKB-KW"/>
</dbReference>
<dbReference type="GO" id="GO:0003677">
    <property type="term" value="F:DNA binding"/>
    <property type="evidence" value="ECO:0007669"/>
    <property type="project" value="InterPro"/>
</dbReference>
<dbReference type="GO" id="GO:0003899">
    <property type="term" value="F:DNA-directed RNA polymerase activity"/>
    <property type="evidence" value="ECO:0007669"/>
    <property type="project" value="UniProtKB-UniRule"/>
</dbReference>
<dbReference type="GO" id="GO:0008270">
    <property type="term" value="F:zinc ion binding"/>
    <property type="evidence" value="ECO:0007669"/>
    <property type="project" value="UniProtKB-UniRule"/>
</dbReference>
<dbReference type="GO" id="GO:0006351">
    <property type="term" value="P:DNA-templated transcription"/>
    <property type="evidence" value="ECO:0007669"/>
    <property type="project" value="UniProtKB-UniRule"/>
</dbReference>
<dbReference type="Gene3D" id="2.20.28.30">
    <property type="entry name" value="RNA polymerase ii, chain L"/>
    <property type="match status" value="1"/>
</dbReference>
<dbReference type="HAMAP" id="MF_00615">
    <property type="entry name" value="RNApol_arch_Rpo12"/>
    <property type="match status" value="1"/>
</dbReference>
<dbReference type="InterPro" id="IPR006591">
    <property type="entry name" value="RNAP_P/RPABC4"/>
</dbReference>
<dbReference type="InterPro" id="IPR029040">
    <property type="entry name" value="RPABC4/Spt4"/>
</dbReference>
<dbReference type="InterPro" id="IPR023464">
    <property type="entry name" value="Rpo12"/>
</dbReference>
<dbReference type="NCBIfam" id="NF001607">
    <property type="entry name" value="PRK00398.1-4"/>
    <property type="match status" value="1"/>
</dbReference>
<dbReference type="Pfam" id="PF03604">
    <property type="entry name" value="Zn_ribbon_RPAB4"/>
    <property type="match status" value="1"/>
</dbReference>
<dbReference type="SMART" id="SM00659">
    <property type="entry name" value="RPOLCX"/>
    <property type="match status" value="1"/>
</dbReference>
<dbReference type="SUPFAM" id="SSF63393">
    <property type="entry name" value="RNA polymerase subunits"/>
    <property type="match status" value="1"/>
</dbReference>
<name>RPO12_PYRAB</name>
<sequence length="49" mass="5681">MVEAIYRCAKCGREVKIDLSVTRDLRCPYCGSKILYKPRPKVPRRVKAI</sequence>
<comment type="function">
    <text evidence="1">DNA-dependent RNA polymerase (RNAP) catalyzes the transcription of DNA into RNA using the four ribonucleoside triphosphates as substrates.</text>
</comment>
<comment type="catalytic activity">
    <reaction evidence="1">
        <text>RNA(n) + a ribonucleoside 5'-triphosphate = RNA(n+1) + diphosphate</text>
        <dbReference type="Rhea" id="RHEA:21248"/>
        <dbReference type="Rhea" id="RHEA-COMP:14527"/>
        <dbReference type="Rhea" id="RHEA-COMP:17342"/>
        <dbReference type="ChEBI" id="CHEBI:33019"/>
        <dbReference type="ChEBI" id="CHEBI:61557"/>
        <dbReference type="ChEBI" id="CHEBI:140395"/>
        <dbReference type="EC" id="2.7.7.6"/>
    </reaction>
</comment>
<comment type="cofactor">
    <cofactor evidence="1">
        <name>Zn(2+)</name>
        <dbReference type="ChEBI" id="CHEBI:29105"/>
    </cofactor>
    <text evidence="1">Binds 1 zinc ion.</text>
</comment>
<comment type="subunit">
    <text evidence="1">Part of the RNA polymerase complex.</text>
</comment>
<comment type="subcellular location">
    <subcellularLocation>
        <location evidence="1">Cytoplasm</location>
    </subcellularLocation>
</comment>
<comment type="similarity">
    <text evidence="1">Belongs to the archaeal Rpo12/eukaryotic RPC10 RNA polymerase subunit family.</text>
</comment>
<keyword id="KW-0963">Cytoplasm</keyword>
<keyword id="KW-0240">DNA-directed RNA polymerase</keyword>
<keyword id="KW-0479">Metal-binding</keyword>
<keyword id="KW-0548">Nucleotidyltransferase</keyword>
<keyword id="KW-0804">Transcription</keyword>
<keyword id="KW-0808">Transferase</keyword>
<keyword id="KW-0862">Zinc</keyword>
<reference key="1">
    <citation type="journal article" date="2003" name="Mol. Microbiol.">
        <title>An integrated analysis of the genome of the hyperthermophilic archaeon Pyrococcus abyssi.</title>
        <authorList>
            <person name="Cohen G.N."/>
            <person name="Barbe V."/>
            <person name="Flament D."/>
            <person name="Galperin M."/>
            <person name="Heilig R."/>
            <person name="Lecompte O."/>
            <person name="Poch O."/>
            <person name="Prieur D."/>
            <person name="Querellou J."/>
            <person name="Ripp R."/>
            <person name="Thierry J.-C."/>
            <person name="Van der Oost J."/>
            <person name="Weissenbach J."/>
            <person name="Zivanovic Y."/>
            <person name="Forterre P."/>
        </authorList>
    </citation>
    <scope>NUCLEOTIDE SEQUENCE [LARGE SCALE GENOMIC DNA]</scope>
    <source>
        <strain>GE5 / Orsay</strain>
    </source>
</reference>
<reference key="2">
    <citation type="journal article" date="2012" name="Curr. Microbiol.">
        <title>Re-annotation of two hyperthermophilic archaea Pyrococcus abyssi GE5 and Pyrococcus furiosus DSM 3638.</title>
        <authorList>
            <person name="Gao J."/>
            <person name="Wang J."/>
        </authorList>
    </citation>
    <scope>GENOME REANNOTATION</scope>
    <source>
        <strain>GE5 / Orsay</strain>
    </source>
</reference>
<accession>Q9V201</accession>
<accession>G8ZHQ7</accession>
<feature type="chain" id="PRO_0000159761" description="DNA-directed RNA polymerase subunit Rpo12">
    <location>
        <begin position="1"/>
        <end position="49"/>
    </location>
</feature>
<feature type="binding site" evidence="1">
    <location>
        <position position="11"/>
    </location>
    <ligand>
        <name>Zn(2+)</name>
        <dbReference type="ChEBI" id="CHEBI:29105"/>
    </ligand>
</feature>
<feature type="binding site" evidence="1">
    <location>
        <position position="27"/>
    </location>
    <ligand>
        <name>Zn(2+)</name>
        <dbReference type="ChEBI" id="CHEBI:29105"/>
    </ligand>
</feature>
<feature type="binding site" evidence="1">
    <location>
        <position position="30"/>
    </location>
    <ligand>
        <name>Zn(2+)</name>
        <dbReference type="ChEBI" id="CHEBI:29105"/>
    </ligand>
</feature>
<proteinExistence type="inferred from homology"/>
<evidence type="ECO:0000255" key="1">
    <source>
        <dbReference type="HAMAP-Rule" id="MF_00615"/>
    </source>
</evidence>
<protein>
    <recommendedName>
        <fullName evidence="1">DNA-directed RNA polymerase subunit Rpo12</fullName>
        <ecNumber evidence="1">2.7.7.6</ecNumber>
    </recommendedName>
    <alternativeName>
        <fullName evidence="1">DNA-directed RNA polymerase subunit P</fullName>
    </alternativeName>
</protein>